<comment type="function">
    <text evidence="3">The small GTPases Rab are key regulators of intracellular membrane trafficking, from the formation of transport vesicles to their fusion with membranes. Rabs cycle between active GTP-bound and inactive GDP-bound states. In their active state, drive transport of vesicular carriers from donor organelles to acceptor organelles to regulate the membrane traffic that maintains organelle identity and morphology. RAB2A regulates autophagy by promoting autophagosome-lysosome fusion via recruitment of the HOPS endosomal tethering complex; this process involves autophagosomal RAB2A and lysosomal RAB39A recruitment of HOPS subcomplexes VPS39-VPS11 and VPS41-VPS16-VPS18-VPS33A, respectively, which assemble into a functional complex to mediate membrane tethering and SNAREs-driven membrane fusion. Required for protein transport from the endoplasmic reticulum to the Golgi complex. Regulates the compacted morphology of the Golgi. Together with RAB2B, redundantly required for efficient autophagic flux.</text>
</comment>
<comment type="catalytic activity">
    <reaction evidence="2">
        <text>GTP + H2O = GDP + phosphate + H(+)</text>
        <dbReference type="Rhea" id="RHEA:19669"/>
        <dbReference type="ChEBI" id="CHEBI:15377"/>
        <dbReference type="ChEBI" id="CHEBI:15378"/>
        <dbReference type="ChEBI" id="CHEBI:37565"/>
        <dbReference type="ChEBI" id="CHEBI:43474"/>
        <dbReference type="ChEBI" id="CHEBI:58189"/>
        <dbReference type="EC" id="3.6.5.2"/>
    </reaction>
    <physiologicalReaction direction="left-to-right" evidence="2">
        <dbReference type="Rhea" id="RHEA:19670"/>
    </physiologicalReaction>
</comment>
<comment type="cofactor">
    <cofactor evidence="3">
        <name>Mg(2+)</name>
        <dbReference type="ChEBI" id="CHEBI:18420"/>
    </cofactor>
</comment>
<comment type="activity regulation">
    <text evidence="6">Regulated by guanine nucleotide exchange factors (GEFs) which promote the exchange of bound GDP for free GTP, GTPase activating proteins (GAPs) which increase the GTP hydrolysis activity, and GDP dissociation inhibitors (GDIs) which inhibit the dissociation of the nucleotide from the GTPase.</text>
</comment>
<comment type="subunit">
    <text evidence="2 3">Interacts with PRKCI. Interacts with TRIP11 (By similarity). Interacts (in GTP-bound form) with GARIN1B (By similarity). Interacts (GTP-bound) with HOPS complex component VPS39; interaction contributes to obtaining a functional HOPS complex that promotes autophagosome-lysosome membrane fusion driven by STX17-SNAP29-VAMP8. May interact with VPS41 (By similarity).</text>
</comment>
<comment type="subcellular location">
    <subcellularLocation>
        <location evidence="3">Endoplasmic reticulum-Golgi intermediate compartment membrane</location>
        <topology evidence="3">Lipid-anchor</topology>
        <orientation evidence="6">Cytoplasmic side</orientation>
    </subcellularLocation>
    <subcellularLocation>
        <location evidence="3">Melanosome</location>
    </subcellularLocation>
    <subcellularLocation>
        <location evidence="3">Endoplasmic reticulum membrane</location>
        <topology evidence="3">Lipid-anchor</topology>
        <orientation evidence="6">Cytoplasmic side</orientation>
    </subcellularLocation>
    <subcellularLocation>
        <location evidence="3">Golgi apparatus membrane</location>
        <topology evidence="3">Lipid-anchor</topology>
        <orientation evidence="6">Cytoplasmic side</orientation>
    </subcellularLocation>
    <subcellularLocation>
        <location evidence="2">Cytoplasmic vesicle</location>
        <location evidence="2">Secretory vesicle</location>
        <location evidence="2">Acrosome</location>
    </subcellularLocation>
    <subcellularLocation>
        <location evidence="2">Cytoplasmic vesicle</location>
        <location evidence="2">Autophagosome membrane</location>
        <topology evidence="3">Lipid-anchor</topology>
        <orientation evidence="6">Cytoplasmic side</orientation>
    </subcellularLocation>
    <text evidence="2 3">Localized in the Golgi apparatus in the round spermatids and in the acrosome in the elongating spermatid (By similarity). Identified by mass spectrometry in melanosome fractions from stage I to stage IV (By similarity).</text>
</comment>
<comment type="domain">
    <text evidence="4">Switch I, switch II and the interswitch regions are characteristic of Rab GTPases and mediate the interactions with Rab downstream effectors. The switch regions undergo conformational changes upon nucleotide binding which drives interaction with specific sets of effector proteins, with most effectors only binding to GTP-bound Rab.</text>
</comment>
<comment type="PTM">
    <text evidence="3">Prenylated. Prenylation is required for association with cellular membranes.</text>
</comment>
<comment type="similarity">
    <text evidence="6">Belongs to the small GTPase superfamily. Rab family.</text>
</comment>
<protein>
    <recommendedName>
        <fullName>Ras-related protein Rab-2A</fullName>
        <ecNumber evidence="2">3.6.5.2</ecNumber>
    </recommendedName>
</protein>
<sequence>MAYAYLFKYIIIGDTGVGKSCLLLQFTDKRFQPVHDLTMGVEFGARMITIDGKQIKLQIWDTAGQESFRSITRSYYRGAAGALLVYDITRRDTFNHLTTWLEDARQHSNSNMVIMLIGNKSDLESRREVKKEEGEAFAREHGLIFMETSAKTASNVEEAFINTAKEIYEKIQEGVFDINNEANGIKIGPQHAATNASHGGNQGGQQAGGGCC</sequence>
<accession>P05712</accession>
<reference key="1">
    <citation type="journal article" date="1987" name="Proc. Natl. Acad. Sci. U.S.A.">
        <title>Four additional members of the ras gene superfamily isolated by an oligonucleotide strategy: molecular cloning of YPT-related cDNAs from a rat brain library.</title>
        <authorList>
            <person name="Touchot N."/>
            <person name="Chardin P."/>
            <person name="Tavitian A."/>
        </authorList>
    </citation>
    <scope>NUCLEOTIDE SEQUENCE [MRNA]</scope>
</reference>
<proteinExistence type="evidence at transcript level"/>
<keyword id="KW-0007">Acetylation</keyword>
<keyword id="KW-0968">Cytoplasmic vesicle</keyword>
<keyword id="KW-0256">Endoplasmic reticulum</keyword>
<keyword id="KW-0931">ER-Golgi transport</keyword>
<keyword id="KW-0333">Golgi apparatus</keyword>
<keyword id="KW-0342">GTP-binding</keyword>
<keyword id="KW-0378">Hydrolase</keyword>
<keyword id="KW-0449">Lipoprotein</keyword>
<keyword id="KW-0460">Magnesium</keyword>
<keyword id="KW-0472">Membrane</keyword>
<keyword id="KW-0479">Metal-binding</keyword>
<keyword id="KW-0547">Nucleotide-binding</keyword>
<keyword id="KW-0636">Prenylation</keyword>
<keyword id="KW-0653">Protein transport</keyword>
<keyword id="KW-1185">Reference proteome</keyword>
<keyword id="KW-0813">Transport</keyword>
<feature type="initiator methionine" description="Removed" evidence="3">
    <location>
        <position position="1"/>
    </location>
</feature>
<feature type="chain" id="PRO_0000121069" description="Ras-related protein Rab-2A">
    <location>
        <begin position="2"/>
        <end position="212"/>
    </location>
</feature>
<feature type="region of interest" description="Required for interaction with PRKCI" evidence="1">
    <location>
        <begin position="2"/>
        <end position="19"/>
    </location>
</feature>
<feature type="region of interest" description="Disordered" evidence="5">
    <location>
        <begin position="190"/>
        <end position="212"/>
    </location>
</feature>
<feature type="short sequence motif" description="Switch 1" evidence="4">
    <location>
        <begin position="37"/>
        <end position="42"/>
    </location>
</feature>
<feature type="short sequence motif" description="Switch 2" evidence="4">
    <location>
        <begin position="63"/>
        <end position="72"/>
    </location>
</feature>
<feature type="compositionally biased region" description="Gly residues" evidence="5">
    <location>
        <begin position="200"/>
        <end position="212"/>
    </location>
</feature>
<feature type="binding site" evidence="4">
    <location>
        <position position="16"/>
    </location>
    <ligand>
        <name>GTP</name>
        <dbReference type="ChEBI" id="CHEBI:37565"/>
    </ligand>
</feature>
<feature type="binding site" evidence="4">
    <location>
        <position position="17"/>
    </location>
    <ligand>
        <name>GTP</name>
        <dbReference type="ChEBI" id="CHEBI:37565"/>
    </ligand>
</feature>
<feature type="binding site" evidence="4">
    <location>
        <position position="18"/>
    </location>
    <ligand>
        <name>GTP</name>
        <dbReference type="ChEBI" id="CHEBI:37565"/>
    </ligand>
</feature>
<feature type="binding site" evidence="4">
    <location>
        <position position="19"/>
    </location>
    <ligand>
        <name>GTP</name>
        <dbReference type="ChEBI" id="CHEBI:37565"/>
    </ligand>
</feature>
<feature type="binding site" evidence="4">
    <location>
        <position position="20"/>
    </location>
    <ligand>
        <name>GTP</name>
        <dbReference type="ChEBI" id="CHEBI:37565"/>
    </ligand>
</feature>
<feature type="binding site" evidence="3">
    <location>
        <position position="20"/>
    </location>
    <ligand>
        <name>Mg(2+)</name>
        <dbReference type="ChEBI" id="CHEBI:18420"/>
    </ligand>
</feature>
<feature type="binding site" evidence="4">
    <location>
        <position position="21"/>
    </location>
    <ligand>
        <name>GTP</name>
        <dbReference type="ChEBI" id="CHEBI:37565"/>
    </ligand>
</feature>
<feature type="binding site" evidence="4">
    <location>
        <position position="38"/>
    </location>
    <ligand>
        <name>GTP</name>
        <dbReference type="ChEBI" id="CHEBI:37565"/>
    </ligand>
</feature>
<feature type="binding site" evidence="4">
    <location>
        <position position="38"/>
    </location>
    <ligand>
        <name>Mg(2+)</name>
        <dbReference type="ChEBI" id="CHEBI:18420"/>
    </ligand>
</feature>
<feature type="binding site" evidence="3">
    <location>
        <position position="61"/>
    </location>
    <ligand>
        <name>Mg(2+)</name>
        <dbReference type="ChEBI" id="CHEBI:18420"/>
    </ligand>
</feature>
<feature type="binding site" evidence="4">
    <location>
        <position position="64"/>
    </location>
    <ligand>
        <name>GTP</name>
        <dbReference type="ChEBI" id="CHEBI:37565"/>
    </ligand>
</feature>
<feature type="binding site" evidence="4">
    <location>
        <position position="119"/>
    </location>
    <ligand>
        <name>GTP</name>
        <dbReference type="ChEBI" id="CHEBI:37565"/>
    </ligand>
</feature>
<feature type="binding site" evidence="4">
    <location>
        <position position="120"/>
    </location>
    <ligand>
        <name>GTP</name>
        <dbReference type="ChEBI" id="CHEBI:37565"/>
    </ligand>
</feature>
<feature type="binding site" evidence="4">
    <location>
        <position position="122"/>
    </location>
    <ligand>
        <name>GTP</name>
        <dbReference type="ChEBI" id="CHEBI:37565"/>
    </ligand>
</feature>
<feature type="binding site" evidence="4">
    <location>
        <position position="150"/>
    </location>
    <ligand>
        <name>GTP</name>
        <dbReference type="ChEBI" id="CHEBI:37565"/>
    </ligand>
</feature>
<feature type="binding site" evidence="4">
    <location>
        <position position="151"/>
    </location>
    <ligand>
        <name>GTP</name>
        <dbReference type="ChEBI" id="CHEBI:37565"/>
    </ligand>
</feature>
<feature type="modified residue" description="N-acetylalanine" evidence="3">
    <location>
        <position position="2"/>
    </location>
</feature>
<feature type="lipid moiety-binding region" description="S-geranylgeranyl cysteine" evidence="1">
    <location>
        <position position="211"/>
    </location>
</feature>
<feature type="lipid moiety-binding region" description="S-geranylgeranyl cysteine" evidence="1">
    <location>
        <position position="212"/>
    </location>
</feature>
<dbReference type="EC" id="3.6.5.2" evidence="2"/>
<dbReference type="EMBL" id="J02999">
    <property type="protein sequence ID" value="AAA42007.1"/>
    <property type="molecule type" value="mRNA"/>
</dbReference>
<dbReference type="PIR" id="B39963">
    <property type="entry name" value="B39963"/>
</dbReference>
<dbReference type="RefSeq" id="NP_113906.1">
    <property type="nucleotide sequence ID" value="NM_031718.1"/>
</dbReference>
<dbReference type="SMR" id="P05712"/>
<dbReference type="BioGRID" id="249274">
    <property type="interactions" value="3"/>
</dbReference>
<dbReference type="CORUM" id="P05712"/>
<dbReference type="FunCoup" id="P05712">
    <property type="interactions" value="3360"/>
</dbReference>
<dbReference type="IntAct" id="P05712">
    <property type="interactions" value="3"/>
</dbReference>
<dbReference type="MINT" id="P05712"/>
<dbReference type="STRING" id="10116.ENSRNOP00000008522"/>
<dbReference type="iPTMnet" id="P05712"/>
<dbReference type="PhosphoSitePlus" id="P05712"/>
<dbReference type="SwissPalm" id="P05712"/>
<dbReference type="jPOST" id="P05712"/>
<dbReference type="PaxDb" id="10116-ENSRNOP00000008522"/>
<dbReference type="GeneID" id="65158"/>
<dbReference type="KEGG" id="rno:65158"/>
<dbReference type="UCSC" id="RGD:68323">
    <property type="organism name" value="rat"/>
</dbReference>
<dbReference type="AGR" id="RGD:68323"/>
<dbReference type="CTD" id="5862"/>
<dbReference type="RGD" id="68323">
    <property type="gene designation" value="Rab2a"/>
</dbReference>
<dbReference type="eggNOG" id="KOG0098">
    <property type="taxonomic scope" value="Eukaryota"/>
</dbReference>
<dbReference type="InParanoid" id="P05712"/>
<dbReference type="PhylomeDB" id="P05712"/>
<dbReference type="Reactome" id="R-RNO-162658">
    <property type="pathway name" value="Golgi Cisternae Pericentriolar Stack Reorganization"/>
</dbReference>
<dbReference type="Reactome" id="R-RNO-8873719">
    <property type="pathway name" value="RAB geranylgeranylation"/>
</dbReference>
<dbReference type="PRO" id="PR:P05712"/>
<dbReference type="Proteomes" id="UP000002494">
    <property type="component" value="Unplaced"/>
</dbReference>
<dbReference type="GO" id="GO:0001669">
    <property type="term" value="C:acrosomal vesicle"/>
    <property type="evidence" value="ECO:0007669"/>
    <property type="project" value="UniProtKB-SubCell"/>
</dbReference>
<dbReference type="GO" id="GO:0000421">
    <property type="term" value="C:autophagosome membrane"/>
    <property type="evidence" value="ECO:0000266"/>
    <property type="project" value="RGD"/>
</dbReference>
<dbReference type="GO" id="GO:0005789">
    <property type="term" value="C:endoplasmic reticulum membrane"/>
    <property type="evidence" value="ECO:0000314"/>
    <property type="project" value="RGD"/>
</dbReference>
<dbReference type="GO" id="GO:0033116">
    <property type="term" value="C:endoplasmic reticulum-Golgi intermediate compartment membrane"/>
    <property type="evidence" value="ECO:0007669"/>
    <property type="project" value="UniProtKB-SubCell"/>
</dbReference>
<dbReference type="GO" id="GO:0005794">
    <property type="term" value="C:Golgi apparatus"/>
    <property type="evidence" value="ECO:0000266"/>
    <property type="project" value="RGD"/>
</dbReference>
<dbReference type="GO" id="GO:0000139">
    <property type="term" value="C:Golgi membrane"/>
    <property type="evidence" value="ECO:0000314"/>
    <property type="project" value="RGD"/>
</dbReference>
<dbReference type="GO" id="GO:0042470">
    <property type="term" value="C:melanosome"/>
    <property type="evidence" value="ECO:0007669"/>
    <property type="project" value="UniProtKB-SubCell"/>
</dbReference>
<dbReference type="GO" id="GO:0016020">
    <property type="term" value="C:membrane"/>
    <property type="evidence" value="ECO:0000314"/>
    <property type="project" value="BHF-UCL"/>
</dbReference>
<dbReference type="GO" id="GO:0043025">
    <property type="term" value="C:neuronal cell body"/>
    <property type="evidence" value="ECO:0000314"/>
    <property type="project" value="RGD"/>
</dbReference>
<dbReference type="GO" id="GO:0048471">
    <property type="term" value="C:perinuclear region of cytoplasm"/>
    <property type="evidence" value="ECO:0000314"/>
    <property type="project" value="UniProtKB"/>
</dbReference>
<dbReference type="GO" id="GO:0030672">
    <property type="term" value="C:synaptic vesicle membrane"/>
    <property type="evidence" value="ECO:0000314"/>
    <property type="project" value="SynGO"/>
</dbReference>
<dbReference type="GO" id="GO:0003925">
    <property type="term" value="F:G protein activity"/>
    <property type="evidence" value="ECO:0000250"/>
    <property type="project" value="UniProtKB"/>
</dbReference>
<dbReference type="GO" id="GO:0019003">
    <property type="term" value="F:GDP binding"/>
    <property type="evidence" value="ECO:0000250"/>
    <property type="project" value="UniProtKB"/>
</dbReference>
<dbReference type="GO" id="GO:0005525">
    <property type="term" value="F:GTP binding"/>
    <property type="evidence" value="ECO:0000314"/>
    <property type="project" value="RGD"/>
</dbReference>
<dbReference type="GO" id="GO:0003924">
    <property type="term" value="F:GTPase activity"/>
    <property type="evidence" value="ECO:0000250"/>
    <property type="project" value="UniProtKB"/>
</dbReference>
<dbReference type="GO" id="GO:0061909">
    <property type="term" value="P:autophagosome-lysosome fusion"/>
    <property type="evidence" value="ECO:0000250"/>
    <property type="project" value="UniProtKB"/>
</dbReference>
<dbReference type="GO" id="GO:0007030">
    <property type="term" value="P:Golgi organization"/>
    <property type="evidence" value="ECO:0000250"/>
    <property type="project" value="UniProtKB"/>
</dbReference>
<dbReference type="GO" id="GO:0016236">
    <property type="term" value="P:macroautophagy"/>
    <property type="evidence" value="ECO:0000250"/>
    <property type="project" value="UniProtKB"/>
</dbReference>
<dbReference type="GO" id="GO:0015031">
    <property type="term" value="P:protein transport"/>
    <property type="evidence" value="ECO:0007669"/>
    <property type="project" value="UniProtKB-KW"/>
</dbReference>
<dbReference type="GO" id="GO:0032482">
    <property type="term" value="P:Rab protein signal transduction"/>
    <property type="evidence" value="ECO:0000305"/>
    <property type="project" value="RGD"/>
</dbReference>
<dbReference type="GO" id="GO:0016192">
    <property type="term" value="P:vesicle-mediated transport"/>
    <property type="evidence" value="ECO:0000318"/>
    <property type="project" value="GO_Central"/>
</dbReference>
<dbReference type="CDD" id="cd01866">
    <property type="entry name" value="Rab2"/>
    <property type="match status" value="1"/>
</dbReference>
<dbReference type="FunFam" id="3.40.50.300:FF:000275">
    <property type="entry name" value="Putative ras-related protein Rab-2A"/>
    <property type="match status" value="1"/>
</dbReference>
<dbReference type="Gene3D" id="3.40.50.300">
    <property type="entry name" value="P-loop containing nucleotide triphosphate hydrolases"/>
    <property type="match status" value="1"/>
</dbReference>
<dbReference type="InterPro" id="IPR027417">
    <property type="entry name" value="P-loop_NTPase"/>
</dbReference>
<dbReference type="InterPro" id="IPR050209">
    <property type="entry name" value="Rab_GTPases_membrane_traffic"/>
</dbReference>
<dbReference type="InterPro" id="IPR005225">
    <property type="entry name" value="Small_GTP-bd"/>
</dbReference>
<dbReference type="InterPro" id="IPR001806">
    <property type="entry name" value="Small_GTPase"/>
</dbReference>
<dbReference type="NCBIfam" id="TIGR00231">
    <property type="entry name" value="small_GTP"/>
    <property type="match status" value="1"/>
</dbReference>
<dbReference type="PANTHER" id="PTHR47979">
    <property type="entry name" value="DRAB11-RELATED"/>
    <property type="match status" value="1"/>
</dbReference>
<dbReference type="Pfam" id="PF00071">
    <property type="entry name" value="Ras"/>
    <property type="match status" value="1"/>
</dbReference>
<dbReference type="PRINTS" id="PR00449">
    <property type="entry name" value="RASTRNSFRMNG"/>
</dbReference>
<dbReference type="SMART" id="SM00175">
    <property type="entry name" value="RAB"/>
    <property type="match status" value="1"/>
</dbReference>
<dbReference type="SMART" id="SM00176">
    <property type="entry name" value="RAN"/>
    <property type="match status" value="1"/>
</dbReference>
<dbReference type="SMART" id="SM00173">
    <property type="entry name" value="RAS"/>
    <property type="match status" value="1"/>
</dbReference>
<dbReference type="SMART" id="SM00174">
    <property type="entry name" value="RHO"/>
    <property type="match status" value="1"/>
</dbReference>
<dbReference type="SUPFAM" id="SSF52540">
    <property type="entry name" value="P-loop containing nucleoside triphosphate hydrolases"/>
    <property type="match status" value="1"/>
</dbReference>
<dbReference type="PROSITE" id="PS51419">
    <property type="entry name" value="RAB"/>
    <property type="match status" value="1"/>
</dbReference>
<organism>
    <name type="scientific">Rattus norvegicus</name>
    <name type="common">Rat</name>
    <dbReference type="NCBI Taxonomy" id="10116"/>
    <lineage>
        <taxon>Eukaryota</taxon>
        <taxon>Metazoa</taxon>
        <taxon>Chordata</taxon>
        <taxon>Craniata</taxon>
        <taxon>Vertebrata</taxon>
        <taxon>Euteleostomi</taxon>
        <taxon>Mammalia</taxon>
        <taxon>Eutheria</taxon>
        <taxon>Euarchontoglires</taxon>
        <taxon>Glires</taxon>
        <taxon>Rodentia</taxon>
        <taxon>Myomorpha</taxon>
        <taxon>Muroidea</taxon>
        <taxon>Muridae</taxon>
        <taxon>Murinae</taxon>
        <taxon>Rattus</taxon>
    </lineage>
</organism>
<gene>
    <name type="primary">Rab2a</name>
    <name type="synonym">Rab2</name>
</gene>
<evidence type="ECO:0000250" key="1"/>
<evidence type="ECO:0000250" key="2">
    <source>
        <dbReference type="UniProtKB" id="P53994"/>
    </source>
</evidence>
<evidence type="ECO:0000250" key="3">
    <source>
        <dbReference type="UniProtKB" id="P61019"/>
    </source>
</evidence>
<evidence type="ECO:0000250" key="4">
    <source>
        <dbReference type="UniProtKB" id="P61106"/>
    </source>
</evidence>
<evidence type="ECO:0000256" key="5">
    <source>
        <dbReference type="SAM" id="MobiDB-lite"/>
    </source>
</evidence>
<evidence type="ECO:0000305" key="6"/>
<name>RAB2A_RAT</name>